<comment type="function">
    <text evidence="1 5">ABC-type transporter; part of the gene cluster that mediates the biosynthesis of the sesterterpenes ophiobolins, fungal phytotoxins with potential anti-cancer activities (PubMed:27116000). Acts as a specific transporter involved in ophiobolins secretion (By similarity).</text>
</comment>
<comment type="subcellular location">
    <subcellularLocation>
        <location evidence="7">Cell membrane</location>
        <topology evidence="2">Multi-pass membrane protein</topology>
    </subcellularLocation>
</comment>
<comment type="similarity">
    <text evidence="7">Belongs to the ABC transporter superfamily. ABCG family. PDR (TC 3.A.1.205) subfamily.</text>
</comment>
<dbReference type="EMBL" id="DS027045">
    <property type="protein sequence ID" value="EAW14649.1"/>
    <property type="molecule type" value="Genomic_DNA"/>
</dbReference>
<dbReference type="RefSeq" id="XP_001276075.1">
    <property type="nucleotide sequence ID" value="XM_001276074.1"/>
</dbReference>
<dbReference type="SMR" id="A1C8C8"/>
<dbReference type="GlyCosmos" id="A1C8C8">
    <property type="glycosylation" value="7 sites, No reported glycans"/>
</dbReference>
<dbReference type="EnsemblFungi" id="EAW14649">
    <property type="protein sequence ID" value="EAW14649"/>
    <property type="gene ID" value="ACLA_076900"/>
</dbReference>
<dbReference type="GeneID" id="4708211"/>
<dbReference type="KEGG" id="act:ACLA_076900"/>
<dbReference type="VEuPathDB" id="FungiDB:ACLA_076900"/>
<dbReference type="eggNOG" id="KOG0065">
    <property type="taxonomic scope" value="Eukaryota"/>
</dbReference>
<dbReference type="HOGENOM" id="CLU_000604_35_0_1"/>
<dbReference type="OMA" id="FNIFAAC"/>
<dbReference type="OrthoDB" id="245989at2759"/>
<dbReference type="Proteomes" id="UP000006701">
    <property type="component" value="Unassembled WGS sequence"/>
</dbReference>
<dbReference type="GO" id="GO:0005886">
    <property type="term" value="C:plasma membrane"/>
    <property type="evidence" value="ECO:0007669"/>
    <property type="project" value="UniProtKB-SubCell"/>
</dbReference>
<dbReference type="GO" id="GO:0140359">
    <property type="term" value="F:ABC-type transporter activity"/>
    <property type="evidence" value="ECO:0007669"/>
    <property type="project" value="InterPro"/>
</dbReference>
<dbReference type="GO" id="GO:0005524">
    <property type="term" value="F:ATP binding"/>
    <property type="evidence" value="ECO:0007669"/>
    <property type="project" value="UniProtKB-KW"/>
</dbReference>
<dbReference type="GO" id="GO:0016887">
    <property type="term" value="F:ATP hydrolysis activity"/>
    <property type="evidence" value="ECO:0007669"/>
    <property type="project" value="InterPro"/>
</dbReference>
<dbReference type="CDD" id="cd03233">
    <property type="entry name" value="ABCG_PDR_domain1"/>
    <property type="match status" value="1"/>
</dbReference>
<dbReference type="CDD" id="cd03232">
    <property type="entry name" value="ABCG_PDR_domain2"/>
    <property type="match status" value="1"/>
</dbReference>
<dbReference type="FunFam" id="3.40.50.300:FF:000881">
    <property type="entry name" value="ABC multidrug transporter A-1"/>
    <property type="match status" value="1"/>
</dbReference>
<dbReference type="FunFam" id="3.40.50.300:FF:000054">
    <property type="entry name" value="ABC multidrug transporter atrF"/>
    <property type="match status" value="1"/>
</dbReference>
<dbReference type="Gene3D" id="3.40.50.300">
    <property type="entry name" value="P-loop containing nucleotide triphosphate hydrolases"/>
    <property type="match status" value="2"/>
</dbReference>
<dbReference type="InterPro" id="IPR003593">
    <property type="entry name" value="AAA+_ATPase"/>
</dbReference>
<dbReference type="InterPro" id="IPR013525">
    <property type="entry name" value="ABC2_TM"/>
</dbReference>
<dbReference type="InterPro" id="IPR029481">
    <property type="entry name" value="ABC_trans_N"/>
</dbReference>
<dbReference type="InterPro" id="IPR003439">
    <property type="entry name" value="ABC_transporter-like_ATP-bd"/>
</dbReference>
<dbReference type="InterPro" id="IPR043926">
    <property type="entry name" value="ABCG_dom"/>
</dbReference>
<dbReference type="InterPro" id="IPR034001">
    <property type="entry name" value="ABCG_PDR_1"/>
</dbReference>
<dbReference type="InterPro" id="IPR034003">
    <property type="entry name" value="ABCG_PDR_2"/>
</dbReference>
<dbReference type="InterPro" id="IPR027417">
    <property type="entry name" value="P-loop_NTPase"/>
</dbReference>
<dbReference type="InterPro" id="IPR010929">
    <property type="entry name" value="PDR_CDR_ABC"/>
</dbReference>
<dbReference type="PANTHER" id="PTHR19241">
    <property type="entry name" value="ATP-BINDING CASSETTE TRANSPORTER"/>
    <property type="match status" value="1"/>
</dbReference>
<dbReference type="Pfam" id="PF01061">
    <property type="entry name" value="ABC2_membrane"/>
    <property type="match status" value="2"/>
</dbReference>
<dbReference type="Pfam" id="PF19055">
    <property type="entry name" value="ABC2_membrane_7"/>
    <property type="match status" value="1"/>
</dbReference>
<dbReference type="Pfam" id="PF00005">
    <property type="entry name" value="ABC_tran"/>
    <property type="match status" value="2"/>
</dbReference>
<dbReference type="Pfam" id="PF14510">
    <property type="entry name" value="ABC_trans_N"/>
    <property type="match status" value="1"/>
</dbReference>
<dbReference type="Pfam" id="PF06422">
    <property type="entry name" value="PDR_CDR"/>
    <property type="match status" value="1"/>
</dbReference>
<dbReference type="SMART" id="SM00382">
    <property type="entry name" value="AAA"/>
    <property type="match status" value="2"/>
</dbReference>
<dbReference type="SUPFAM" id="SSF52540">
    <property type="entry name" value="P-loop containing nucleoside triphosphate hydrolases"/>
    <property type="match status" value="2"/>
</dbReference>
<dbReference type="PROSITE" id="PS50893">
    <property type="entry name" value="ABC_TRANSPORTER_2"/>
    <property type="match status" value="2"/>
</dbReference>
<name>OBLD_ASPCL</name>
<proteinExistence type="inferred from homology"/>
<gene>
    <name evidence="6" type="primary">oblD</name>
    <name type="ORF">ACLA_076900</name>
</gene>
<accession>A1C8C8</accession>
<protein>
    <recommendedName>
        <fullName evidence="6">ABC-type transporter oblD</fullName>
    </recommendedName>
    <alternativeName>
        <fullName evidence="6">Ophiobolin biosynthesis cluster protein D</fullName>
    </alternativeName>
</protein>
<reference key="1">
    <citation type="journal article" date="2008" name="PLoS Genet.">
        <title>Genomic islands in the pathogenic filamentous fungus Aspergillus fumigatus.</title>
        <authorList>
            <person name="Fedorova N.D."/>
            <person name="Khaldi N."/>
            <person name="Joardar V.S."/>
            <person name="Maiti R."/>
            <person name="Amedeo P."/>
            <person name="Anderson M.J."/>
            <person name="Crabtree J."/>
            <person name="Silva J.C."/>
            <person name="Badger J.H."/>
            <person name="Albarraq A."/>
            <person name="Angiuoli S."/>
            <person name="Bussey H."/>
            <person name="Bowyer P."/>
            <person name="Cotty P.J."/>
            <person name="Dyer P.S."/>
            <person name="Egan A."/>
            <person name="Galens K."/>
            <person name="Fraser-Liggett C.M."/>
            <person name="Haas B.J."/>
            <person name="Inman J.M."/>
            <person name="Kent R."/>
            <person name="Lemieux S."/>
            <person name="Malavazi I."/>
            <person name="Orvis J."/>
            <person name="Roemer T."/>
            <person name="Ronning C.M."/>
            <person name="Sundaram J.P."/>
            <person name="Sutton G."/>
            <person name="Turner G."/>
            <person name="Venter J.C."/>
            <person name="White O.R."/>
            <person name="Whitty B.R."/>
            <person name="Youngman P."/>
            <person name="Wolfe K.H."/>
            <person name="Goldman G.H."/>
            <person name="Wortman J.R."/>
            <person name="Jiang B."/>
            <person name="Denning D.W."/>
            <person name="Nierman W.C."/>
        </authorList>
    </citation>
    <scope>NUCLEOTIDE SEQUENCE [LARGE SCALE GENOMIC DNA]</scope>
    <source>
        <strain>ATCC 1007 / CBS 513.65 / DSM 816 / NCTC 3887 / NRRL 1 / QM 1276 / 107</strain>
    </source>
</reference>
<reference key="2">
    <citation type="journal article" date="2016" name="Org. Lett.">
        <title>Multiple oxidative modifications in the ophiobolin biosynthesis: P450 oxidations found in genome mining.</title>
        <authorList>
            <person name="Narita K."/>
            <person name="Chiba R."/>
            <person name="Minami A."/>
            <person name="Kodama M."/>
            <person name="Fujii I."/>
            <person name="Gomi K."/>
            <person name="Oikawa H."/>
        </authorList>
    </citation>
    <scope>FUNCTION</scope>
</reference>
<evidence type="ECO:0000250" key="1">
    <source>
        <dbReference type="UniProtKB" id="M2UCE5"/>
    </source>
</evidence>
<evidence type="ECO:0000255" key="2"/>
<evidence type="ECO:0000255" key="3">
    <source>
        <dbReference type="PROSITE-ProRule" id="PRU00434"/>
    </source>
</evidence>
<evidence type="ECO:0000255" key="4">
    <source>
        <dbReference type="PROSITE-ProRule" id="PRU00498"/>
    </source>
</evidence>
<evidence type="ECO:0000269" key="5">
    <source>
    </source>
</evidence>
<evidence type="ECO:0000303" key="6">
    <source>
    </source>
</evidence>
<evidence type="ECO:0000305" key="7"/>
<feature type="chain" id="PRO_0000451173" description="ABC-type transporter oblD">
    <location>
        <begin position="1"/>
        <end position="1446"/>
    </location>
</feature>
<feature type="transmembrane region" description="Helical" evidence="2">
    <location>
        <begin position="468"/>
        <end position="488"/>
    </location>
</feature>
<feature type="transmembrane region" description="Helical" evidence="2">
    <location>
        <begin position="502"/>
        <end position="522"/>
    </location>
</feature>
<feature type="transmembrane region" description="Helical" evidence="2">
    <location>
        <begin position="548"/>
        <end position="568"/>
    </location>
</feature>
<feature type="transmembrane region" description="Helical" evidence="2">
    <location>
        <begin position="577"/>
        <end position="597"/>
    </location>
</feature>
<feature type="transmembrane region" description="Helical" evidence="2">
    <location>
        <begin position="610"/>
        <end position="630"/>
    </location>
</feature>
<feature type="transmembrane region" description="Helical" evidence="2">
    <location>
        <begin position="719"/>
        <end position="739"/>
    </location>
</feature>
<feature type="transmembrane region" description="Helical" evidence="2">
    <location>
        <begin position="1147"/>
        <end position="1167"/>
    </location>
</feature>
<feature type="transmembrane region" description="Helical" evidence="2">
    <location>
        <begin position="1177"/>
        <end position="1197"/>
    </location>
</feature>
<feature type="transmembrane region" description="Helical" evidence="2">
    <location>
        <begin position="1217"/>
        <end position="1237"/>
    </location>
</feature>
<feature type="transmembrane region" description="Helical" evidence="2">
    <location>
        <begin position="1265"/>
        <end position="1285"/>
    </location>
</feature>
<feature type="transmembrane region" description="Helical" evidence="2">
    <location>
        <begin position="1301"/>
        <end position="1321"/>
    </location>
</feature>
<feature type="transmembrane region" description="Helical" evidence="2">
    <location>
        <begin position="1412"/>
        <end position="1432"/>
    </location>
</feature>
<feature type="domain" description="ABC transporter 1" evidence="3">
    <location>
        <begin position="104"/>
        <end position="357"/>
    </location>
</feature>
<feature type="domain" description="ABC transporter 2" evidence="3">
    <location>
        <begin position="796"/>
        <end position="1038"/>
    </location>
</feature>
<feature type="binding site" evidence="3">
    <location>
        <begin position="832"/>
        <end position="839"/>
    </location>
    <ligand>
        <name>ATP</name>
        <dbReference type="ChEBI" id="CHEBI:30616"/>
    </ligand>
</feature>
<feature type="glycosylation site" description="N-linked (GlcNAc...) asparagine" evidence="4">
    <location>
        <position position="9"/>
    </location>
</feature>
<feature type="glycosylation site" description="N-linked (GlcNAc...) asparagine" evidence="4">
    <location>
        <position position="28"/>
    </location>
</feature>
<feature type="glycosylation site" description="N-linked (GlcNAc...) asparagine" evidence="4">
    <location>
        <position position="222"/>
    </location>
</feature>
<feature type="glycosylation site" description="N-linked (GlcNAc...) asparagine" evidence="4">
    <location>
        <position position="281"/>
    </location>
</feature>
<feature type="glycosylation site" description="N-linked (GlcNAc...) asparagine" evidence="4">
    <location>
        <position position="305"/>
    </location>
</feature>
<feature type="glycosylation site" description="N-linked (GlcNAc...) asparagine" evidence="4">
    <location>
        <position position="1344"/>
    </location>
</feature>
<feature type="glycosylation site" description="N-linked (GlcNAc...) asparagine" evidence="4">
    <location>
        <position position="1359"/>
    </location>
</feature>
<organism>
    <name type="scientific">Aspergillus clavatus (strain ATCC 1007 / CBS 513.65 / DSM 816 / NCTC 3887 / NRRL 1 / QM 1276 / 107)</name>
    <dbReference type="NCBI Taxonomy" id="344612"/>
    <lineage>
        <taxon>Eukaryota</taxon>
        <taxon>Fungi</taxon>
        <taxon>Dikarya</taxon>
        <taxon>Ascomycota</taxon>
        <taxon>Pezizomycotina</taxon>
        <taxon>Eurotiomycetes</taxon>
        <taxon>Eurotiomycetidae</taxon>
        <taxon>Eurotiales</taxon>
        <taxon>Aspergillaceae</taxon>
        <taxon>Aspergillus</taxon>
        <taxon>Aspergillus subgen. Fumigati</taxon>
    </lineage>
</organism>
<keyword id="KW-0067">ATP-binding</keyword>
<keyword id="KW-1003">Cell membrane</keyword>
<keyword id="KW-0325">Glycoprotein</keyword>
<keyword id="KW-0472">Membrane</keyword>
<keyword id="KW-0547">Nucleotide-binding</keyword>
<keyword id="KW-1185">Reference proteome</keyword>
<keyword id="KW-0812">Transmembrane</keyword>
<keyword id="KW-1133">Transmembrane helix</keyword>
<keyword id="KW-0813">Transport</keyword>
<sequence>MNEDHEAGNSSREAEVHQLARQFTDQSNYSAAGQNPFAVEAGSALDPNGEHFNARAWCKAMLQMHTGDKQAHPLRTLGVAFSNLNVHGFGSDTDYQKSVGNVWLEVLSLVSKAFGQKQRKIEILQNMEGLVEAGEMLVVLGPPGSGCSTFLKTIAGETYGFHVDKNSNINFQGIAKQMAHEFRGEAIYTAEVDVHFPKLTVGDTLYFAARARAPRHIPGGVNATQYASHMRDVIMAMFGISHTKNTIVGNDFIRGVSGGERKRVSIAEACLSNAPLQCWDNSTRGLDSANAIEFCKTLRMQADINGTTACVSLYQAPQAAYDYFDKALVLYEGREIYFGRTSMAKQYFLDMGFVCPDRQTDADFLTSMTSHLERVVQPGYEGRVPRTPDEFAARWRASPQRAQLLQDIKCYNAKFALDGEYLDKLKQSRRAQQAKAQRVSSPYTLSYVQQVELCLWRGYQRLKADPSVTISSVFGNTIISLVIASIFYNLKADTSTFFQRGALLFFAVLMNALGCGLEMLTLYAQRGIIEKHSRYALYHPSAEAFSSMIMDLPYKIINAITSNIVLYFMTNLRREPGAFFFFVFTSFVLTLTMSMFFRSMASLSRSLVQALPFSAVLLLGLSMYTGFTIPTGYMLGWARWIAYINPISYGFESLLINEFHNRDFPCMNYVPSGPGYTDLGLNNRVCSTVGSVPGQAFVNGDAYIESAYIYTASHKWRNIGVIFAYMFLLAAVYLVATDFITEKKSKGEILVFPRGHEALKKGKSDEDLEEGSGRSVTVEKTGSDGLTMIERQTAIFQWKDVCFDIKIGKENRRILDHVDGWVKPGTLTALMGVSGAGKTTLLDVLATRTSVGIISGEILVDGQPRDDSFQRKTGYAQQQDLHLSTATVREALEFSALLRQSAHVPRQEKIDYVTEVIKLLDMTEYADAVIGVPGEGLNVEQRKRLTIGVELAARPQLLLFLDEPTSGLDSQTSWAILDLLDKLKKNGQAILCTIHQPSAMLFQRFDRLLFLQAGGRTVYFGEVGENSQILIDYFVRNGGPPCPPAANPAEWMLDVIGAAPGSHTNINWFETWRKSPEYARVQEHLAELKRERPEQTNLFRTTSSQKREDKASYREFAAPFCAQLCEVQVRVFQQIWRSPTYIYSKTALCVLSALFVGFSLFHTPNTIQGLQNQMFGIFMLLTVFGQLIQQIMPHFVAQRALYEVRERPAKTYSWKAFIISNIVVELPWNSLMSVLMFLCWYYPIGLYRNAEPTDAVSLRGTQMWLMVWTFLLFSSTFAHFMIAAFDAAENAGNLGNLLFLLCLIFCGVLATPGQLPGFWIFMYRVSPFTYLVSGMLSVGISNTNATCADNEYLRFDPVNGTCGKYMDSYISNMGGYLEDEMATSDCSFCPIKETNVFLSSVSSSYSEIWRNFGLMWVFIVFNIFAACLLYWWVRVPRVKKPVAKTE</sequence>